<protein>
    <recommendedName>
        <fullName evidence="4">UDP-glycosyltransferase</fullName>
        <ecNumber evidence="3">2.4.1.-</ecNumber>
    </recommendedName>
    <alternativeName>
        <fullName evidence="4">3-C-glucosyltransferase</fullName>
        <shortName evidence="4">CGT</shortName>
    </alternativeName>
</protein>
<accession>A0A364KRL8</accession>
<comment type="function">
    <text evidence="3">UDP-glycosyltransferase; part of the gene cluster that mediates the biosynthesis of stromemycin, a depside C-glucoside with two unsaturated C9 side chains belonging to aromatic polyketide glycosides (PubMed:38545685). Acts as the tailoring enzyme responsible for 3-C-glucosylation of bininalkenylresorcylic acid to yield stromemycin (PubMed:38545685).</text>
</comment>
<comment type="catalytic activity">
    <reaction evidence="3">
        <text>stromemycin aglycone + UDP-alpha-D-glucose = stromemycin + UDP + H(+)</text>
        <dbReference type="Rhea" id="RHEA:81995"/>
        <dbReference type="ChEBI" id="CHEBI:15378"/>
        <dbReference type="ChEBI" id="CHEBI:58223"/>
        <dbReference type="ChEBI" id="CHEBI:58885"/>
        <dbReference type="ChEBI" id="CHEBI:231925"/>
        <dbReference type="ChEBI" id="CHEBI:231926"/>
    </reaction>
    <physiologicalReaction direction="left-to-right" evidence="3">
        <dbReference type="Rhea" id="RHEA:81996"/>
    </physiologicalReaction>
</comment>
<comment type="pathway">
    <text evidence="3">Mycotoxin biosynthesis.</text>
</comment>
<comment type="subcellular location">
    <subcellularLocation>
        <location evidence="1">Membrane</location>
        <topology evidence="1">Single-pass membrane protein</topology>
    </subcellularLocation>
</comment>
<comment type="biotechnology">
    <text evidence="3">Stromemycin was found to show antibacterial activity against methicillin-resistant Staphylococcus aureus (MRSA) as well as significant protein tyrosine phosphatase 1B (PTP1B) inhibitory activity. Moreover, related O-glycosides show also significant anti-HIV activity or alpha-glucosidase inhibitory activity, as well as moderate cytotoxic activity against cancer cells and thus are promising candidates for drug discovery projects.</text>
</comment>
<comment type="similarity">
    <text evidence="5">Belongs to the glycosyltransferase 28 family.</text>
</comment>
<organism>
    <name type="scientific">Talaromyces amestolkiae</name>
    <dbReference type="NCBI Taxonomy" id="1196081"/>
    <lineage>
        <taxon>Eukaryota</taxon>
        <taxon>Fungi</taxon>
        <taxon>Dikarya</taxon>
        <taxon>Ascomycota</taxon>
        <taxon>Pezizomycotina</taxon>
        <taxon>Eurotiomycetes</taxon>
        <taxon>Eurotiomycetidae</taxon>
        <taxon>Eurotiales</taxon>
        <taxon>Trichocomaceae</taxon>
        <taxon>Talaromyces</taxon>
        <taxon>Talaromyces sect. Talaromyces</taxon>
    </lineage>
</organism>
<name>CGT_TALAM</name>
<reference key="1">
    <citation type="journal article" date="2017" name="Biotechnol. Biofuels">
        <title>Differential beta-glucosidase expression as a function of carbon source availability in Talaromyces amestolkiae: a genomic and proteomic approach.</title>
        <authorList>
            <person name="de Eugenio L.I."/>
            <person name="Mendez-Liter J.A."/>
            <person name="Nieto-Dominguez M."/>
            <person name="Alonso L."/>
            <person name="Gil-Munoz J."/>
            <person name="Barriuso J."/>
            <person name="Prieto A."/>
            <person name="Martinez M.J."/>
        </authorList>
    </citation>
    <scope>NUCLEOTIDE SEQUENCE [LARGE SCALE GENOMIC DNA]</scope>
    <source>
        <strain>CIB</strain>
    </source>
</reference>
<reference key="2">
    <citation type="journal article" date="2024" name="J. Am. Chem. Soc.">
        <title>Targeted discovery of glycosylated natural products by tailoring enzyme-guided genome mining and MS-based metabolome analysis.</title>
        <authorList>
            <person name="Chen D."/>
            <person name="Song Z."/>
            <person name="Han J."/>
            <person name="Liu J."/>
            <person name="Liu H."/>
            <person name="Dai J."/>
        </authorList>
    </citation>
    <scope>FUNCTION</scope>
    <scope>CATALYTIC ACTIVITY</scope>
    <scope>PATHWAY</scope>
    <scope>BIOTECHNOLOGY</scope>
</reference>
<evidence type="ECO:0000255" key="1"/>
<evidence type="ECO:0000255" key="2">
    <source>
        <dbReference type="PROSITE-ProRule" id="PRU00498"/>
    </source>
</evidence>
<evidence type="ECO:0000269" key="3">
    <source>
    </source>
</evidence>
<evidence type="ECO:0000303" key="4">
    <source>
    </source>
</evidence>
<evidence type="ECO:0000305" key="5"/>
<sequence length="529" mass="59705">MTILSAERAPSRRILAVVTVGRYTCAAPILEICRILHARGHTIEFACLDGHQGLATPHAFVSKIHVVGRNMTVEEDKALYRLFDESDASNAEGRKGTFRALMKFHSWWPETYRNLKALVSDPAYRPDFILADLLADACIDIMNEFEIPLAVHYPQMPIQMAPQKYIPGMPGAQLKHLSSEHASLWDRLQEEYHVLQLIFAMKDYILFQRKMRREMGLGPRPPPRKPDYLVLVNSFFGLEVPKDLPPLMIPIGPVLADTFTPLDTTPELLNFLQVHRKVIYVAFGSHVELPAWRVRRLIKGLVQALESGDIDGVIWAWKDRASVMKDLESDPSSIDDAKVEYSAILDNRNEGFKIVGWVPQRAILDHSSVCLYLSHCGASSTMEAVYHGVPVVAMPVYGDQLANGKRLEAAGVGINMNRKNFTAEELSANIKTLVRDEQGSFARNVLRLQRIATANSRRKYVAADRIEEVMYDAELLSSDEAVVSRPMHLQTPDSRMSWFKANNLDLYLVYIALFAVPVGAVRWISNNWL</sequence>
<gene>
    <name type="ORF">BHQ10_002206</name>
</gene>
<dbReference type="EC" id="2.4.1.-" evidence="3"/>
<dbReference type="EMBL" id="MIKG01000003">
    <property type="protein sequence ID" value="RAO66194.1"/>
    <property type="molecule type" value="Genomic_DNA"/>
</dbReference>
<dbReference type="RefSeq" id="XP_040730711.1">
    <property type="nucleotide sequence ID" value="XM_040874327.1"/>
</dbReference>
<dbReference type="SMR" id="A0A364KRL8"/>
<dbReference type="STRING" id="1196081.A0A364KRL8"/>
<dbReference type="GeneID" id="63791423"/>
<dbReference type="OrthoDB" id="5835829at2759"/>
<dbReference type="Proteomes" id="UP000249363">
    <property type="component" value="Unassembled WGS sequence"/>
</dbReference>
<dbReference type="GO" id="GO:0016020">
    <property type="term" value="C:membrane"/>
    <property type="evidence" value="ECO:0007669"/>
    <property type="project" value="UniProtKB-SubCell"/>
</dbReference>
<dbReference type="GO" id="GO:0008194">
    <property type="term" value="F:UDP-glycosyltransferase activity"/>
    <property type="evidence" value="ECO:0007669"/>
    <property type="project" value="InterPro"/>
</dbReference>
<dbReference type="CDD" id="cd03784">
    <property type="entry name" value="GT1_Gtf-like"/>
    <property type="match status" value="1"/>
</dbReference>
<dbReference type="Gene3D" id="3.40.50.2000">
    <property type="entry name" value="Glycogen Phosphorylase B"/>
    <property type="match status" value="2"/>
</dbReference>
<dbReference type="InterPro" id="IPR050271">
    <property type="entry name" value="UDP-glycosyltransferase"/>
</dbReference>
<dbReference type="InterPro" id="IPR002213">
    <property type="entry name" value="UDP_glucos_trans"/>
</dbReference>
<dbReference type="InterPro" id="IPR035595">
    <property type="entry name" value="UDP_glycos_trans_CS"/>
</dbReference>
<dbReference type="PANTHER" id="PTHR48043">
    <property type="entry name" value="EG:EG0003.4 PROTEIN-RELATED"/>
    <property type="match status" value="1"/>
</dbReference>
<dbReference type="PANTHER" id="PTHR48043:SF145">
    <property type="entry name" value="FI06409P-RELATED"/>
    <property type="match status" value="1"/>
</dbReference>
<dbReference type="Pfam" id="PF00201">
    <property type="entry name" value="UDPGT"/>
    <property type="match status" value="1"/>
</dbReference>
<dbReference type="SUPFAM" id="SSF53756">
    <property type="entry name" value="UDP-Glycosyltransferase/glycogen phosphorylase"/>
    <property type="match status" value="1"/>
</dbReference>
<dbReference type="PROSITE" id="PS00375">
    <property type="entry name" value="UDPGT"/>
    <property type="match status" value="1"/>
</dbReference>
<feature type="chain" id="PRO_0000461507" description="UDP-glycosyltransferase">
    <location>
        <begin position="1"/>
        <end position="529"/>
    </location>
</feature>
<feature type="transmembrane region" description="Helical" evidence="1">
    <location>
        <begin position="504"/>
        <end position="524"/>
    </location>
</feature>
<feature type="glycosylation site" description="N-linked (GlcNAc...) asparagine" evidence="2">
    <location>
        <position position="70"/>
    </location>
</feature>
<feature type="glycosylation site" description="N-linked (GlcNAc...) asparagine" evidence="2">
    <location>
        <position position="420"/>
    </location>
</feature>
<keyword id="KW-0325">Glycoprotein</keyword>
<keyword id="KW-0328">Glycosyltransferase</keyword>
<keyword id="KW-0472">Membrane</keyword>
<keyword id="KW-1185">Reference proteome</keyword>
<keyword id="KW-0808">Transferase</keyword>
<keyword id="KW-0812">Transmembrane</keyword>
<keyword id="KW-1133">Transmembrane helix</keyword>
<proteinExistence type="evidence at protein level"/>